<name>RBL_ULMAL</name>
<protein>
    <recommendedName>
        <fullName evidence="1">Ribulose bisphosphate carboxylase large chain</fullName>
        <shortName evidence="1">RuBisCO large subunit</shortName>
        <ecNumber evidence="1">4.1.1.39</ecNumber>
    </recommendedName>
</protein>
<reference key="1">
    <citation type="journal article" date="1994" name="Plant Syst. Evol.">
        <title>Phylogenetic relationships of the Juglandaceae.</title>
        <authorList>
            <person name="Gunter L.E."/>
            <person name="Kochert G."/>
            <person name="Giannasi D.E."/>
        </authorList>
    </citation>
    <scope>NUCLEOTIDE SEQUENCE [GENOMIC DNA]</scope>
    <source>
        <tissue>Leaf</tissue>
    </source>
</reference>
<gene>
    <name evidence="1" type="primary">rbcL</name>
</gene>
<comment type="function">
    <text evidence="1">RuBisCO catalyzes two reactions: the carboxylation of D-ribulose 1,5-bisphosphate, the primary event in carbon dioxide fixation, as well as the oxidative fragmentation of the pentose substrate in the photorespiration process. Both reactions occur simultaneously and in competition at the same active site.</text>
</comment>
<comment type="catalytic activity">
    <reaction evidence="1">
        <text>2 (2R)-3-phosphoglycerate + 2 H(+) = D-ribulose 1,5-bisphosphate + CO2 + H2O</text>
        <dbReference type="Rhea" id="RHEA:23124"/>
        <dbReference type="ChEBI" id="CHEBI:15377"/>
        <dbReference type="ChEBI" id="CHEBI:15378"/>
        <dbReference type="ChEBI" id="CHEBI:16526"/>
        <dbReference type="ChEBI" id="CHEBI:57870"/>
        <dbReference type="ChEBI" id="CHEBI:58272"/>
        <dbReference type="EC" id="4.1.1.39"/>
    </reaction>
</comment>
<comment type="catalytic activity">
    <reaction evidence="1">
        <text>D-ribulose 1,5-bisphosphate + O2 = 2-phosphoglycolate + (2R)-3-phosphoglycerate + 2 H(+)</text>
        <dbReference type="Rhea" id="RHEA:36631"/>
        <dbReference type="ChEBI" id="CHEBI:15378"/>
        <dbReference type="ChEBI" id="CHEBI:15379"/>
        <dbReference type="ChEBI" id="CHEBI:57870"/>
        <dbReference type="ChEBI" id="CHEBI:58033"/>
        <dbReference type="ChEBI" id="CHEBI:58272"/>
    </reaction>
</comment>
<comment type="cofactor">
    <cofactor evidence="1">
        <name>Mg(2+)</name>
        <dbReference type="ChEBI" id="CHEBI:18420"/>
    </cofactor>
    <text evidence="1">Binds 1 Mg(2+) ion per subunit.</text>
</comment>
<comment type="subunit">
    <text evidence="1">Heterohexadecamer of 8 large chains and 8 small chains; disulfide-linked. The disulfide link is formed within the large subunit homodimers.</text>
</comment>
<comment type="subcellular location">
    <subcellularLocation>
        <location>Plastid</location>
        <location>Chloroplast</location>
    </subcellularLocation>
</comment>
<comment type="PTM">
    <text evidence="1">The disulfide bond which can form in the large chain dimeric partners within the hexadecamer appears to be associated with oxidative stress and protein turnover.</text>
</comment>
<comment type="miscellaneous">
    <text evidence="1">The basic functional RuBisCO is composed of a large chain homodimer in a 'head-to-tail' conformation. In form I RuBisCO this homodimer is arranged in a barrel-like tetramer with the small subunits forming a tetrameric 'cap' on each end of the 'barrel'.</text>
</comment>
<comment type="similarity">
    <text evidence="1">Belongs to the RuBisCO large chain family. Type I subfamily.</text>
</comment>
<comment type="sequence caution" evidence="2">
    <conflict type="erroneous initiation">
        <sequence resource="EMBL-CDS" id="AAA20538"/>
    </conflict>
</comment>
<dbReference type="EC" id="4.1.1.39" evidence="1"/>
<dbReference type="EMBL" id="U00441">
    <property type="protein sequence ID" value="AAA20538.1"/>
    <property type="status" value="ALT_INIT"/>
    <property type="molecule type" value="Genomic_DNA"/>
</dbReference>
<dbReference type="GO" id="GO:0009507">
    <property type="term" value="C:chloroplast"/>
    <property type="evidence" value="ECO:0007669"/>
    <property type="project" value="UniProtKB-SubCell"/>
</dbReference>
<dbReference type="GO" id="GO:0000287">
    <property type="term" value="F:magnesium ion binding"/>
    <property type="evidence" value="ECO:0007669"/>
    <property type="project" value="InterPro"/>
</dbReference>
<dbReference type="GO" id="GO:0004497">
    <property type="term" value="F:monooxygenase activity"/>
    <property type="evidence" value="ECO:0007669"/>
    <property type="project" value="UniProtKB-KW"/>
</dbReference>
<dbReference type="GO" id="GO:0016984">
    <property type="term" value="F:ribulose-bisphosphate carboxylase activity"/>
    <property type="evidence" value="ECO:0007669"/>
    <property type="project" value="UniProtKB-EC"/>
</dbReference>
<dbReference type="GO" id="GO:0009853">
    <property type="term" value="P:photorespiration"/>
    <property type="evidence" value="ECO:0007669"/>
    <property type="project" value="UniProtKB-KW"/>
</dbReference>
<dbReference type="GO" id="GO:0019253">
    <property type="term" value="P:reductive pentose-phosphate cycle"/>
    <property type="evidence" value="ECO:0007669"/>
    <property type="project" value="UniProtKB-KW"/>
</dbReference>
<dbReference type="CDD" id="cd08212">
    <property type="entry name" value="RuBisCO_large_I"/>
    <property type="match status" value="1"/>
</dbReference>
<dbReference type="FunFam" id="3.20.20.110:FF:000001">
    <property type="entry name" value="Ribulose bisphosphate carboxylase large chain"/>
    <property type="match status" value="1"/>
</dbReference>
<dbReference type="FunFam" id="3.30.70.150:FF:000001">
    <property type="entry name" value="Ribulose bisphosphate carboxylase large chain"/>
    <property type="match status" value="1"/>
</dbReference>
<dbReference type="Gene3D" id="3.20.20.110">
    <property type="entry name" value="Ribulose bisphosphate carboxylase, large subunit, C-terminal domain"/>
    <property type="match status" value="1"/>
</dbReference>
<dbReference type="Gene3D" id="3.30.70.150">
    <property type="entry name" value="RuBisCO large subunit, N-terminal domain"/>
    <property type="match status" value="1"/>
</dbReference>
<dbReference type="HAMAP" id="MF_01338">
    <property type="entry name" value="RuBisCO_L_type1"/>
    <property type="match status" value="1"/>
</dbReference>
<dbReference type="InterPro" id="IPR033966">
    <property type="entry name" value="RuBisCO"/>
</dbReference>
<dbReference type="InterPro" id="IPR020878">
    <property type="entry name" value="RuBisCo_large_chain_AS"/>
</dbReference>
<dbReference type="InterPro" id="IPR000685">
    <property type="entry name" value="RuBisCO_lsu_C"/>
</dbReference>
<dbReference type="InterPro" id="IPR036376">
    <property type="entry name" value="RuBisCO_lsu_C_sf"/>
</dbReference>
<dbReference type="InterPro" id="IPR017443">
    <property type="entry name" value="RuBisCO_lsu_fd_N"/>
</dbReference>
<dbReference type="InterPro" id="IPR036422">
    <property type="entry name" value="RuBisCO_lsu_N_sf"/>
</dbReference>
<dbReference type="InterPro" id="IPR020888">
    <property type="entry name" value="RuBisCO_lsuI"/>
</dbReference>
<dbReference type="NCBIfam" id="NF003252">
    <property type="entry name" value="PRK04208.1"/>
    <property type="match status" value="1"/>
</dbReference>
<dbReference type="PANTHER" id="PTHR42704">
    <property type="entry name" value="RIBULOSE BISPHOSPHATE CARBOXYLASE"/>
    <property type="match status" value="1"/>
</dbReference>
<dbReference type="PANTHER" id="PTHR42704:SF16">
    <property type="entry name" value="RIBULOSE BISPHOSPHATE CARBOXYLASE LARGE CHAIN"/>
    <property type="match status" value="1"/>
</dbReference>
<dbReference type="Pfam" id="PF00016">
    <property type="entry name" value="RuBisCO_large"/>
    <property type="match status" value="1"/>
</dbReference>
<dbReference type="Pfam" id="PF02788">
    <property type="entry name" value="RuBisCO_large_N"/>
    <property type="match status" value="1"/>
</dbReference>
<dbReference type="SFLD" id="SFLDG01052">
    <property type="entry name" value="RuBisCO"/>
    <property type="match status" value="1"/>
</dbReference>
<dbReference type="SFLD" id="SFLDS00014">
    <property type="entry name" value="RuBisCO"/>
    <property type="match status" value="1"/>
</dbReference>
<dbReference type="SFLD" id="SFLDG00301">
    <property type="entry name" value="RuBisCO-like_proteins"/>
    <property type="match status" value="1"/>
</dbReference>
<dbReference type="SUPFAM" id="SSF51649">
    <property type="entry name" value="RuBisCo, C-terminal domain"/>
    <property type="match status" value="1"/>
</dbReference>
<dbReference type="SUPFAM" id="SSF54966">
    <property type="entry name" value="RuBisCO, large subunit, small (N-terminal) domain"/>
    <property type="match status" value="1"/>
</dbReference>
<dbReference type="PROSITE" id="PS00157">
    <property type="entry name" value="RUBISCO_LARGE"/>
    <property type="match status" value="1"/>
</dbReference>
<feature type="chain" id="PRO_0000062608" description="Ribulose bisphosphate carboxylase large chain">
    <location>
        <begin position="1" status="less than"/>
        <end position="465"/>
    </location>
</feature>
<feature type="active site" description="Proton acceptor" evidence="1">
    <location>
        <position position="165"/>
    </location>
</feature>
<feature type="active site" description="Proton acceptor" evidence="1">
    <location>
        <position position="284"/>
    </location>
</feature>
<feature type="binding site" description="in homodimeric partner" evidence="1">
    <location>
        <position position="113"/>
    </location>
    <ligand>
        <name>substrate</name>
    </ligand>
</feature>
<feature type="binding site" evidence="1">
    <location>
        <position position="163"/>
    </location>
    <ligand>
        <name>substrate</name>
    </ligand>
</feature>
<feature type="binding site" evidence="1">
    <location>
        <position position="167"/>
    </location>
    <ligand>
        <name>substrate</name>
    </ligand>
</feature>
<feature type="binding site" description="via carbamate group" evidence="1">
    <location>
        <position position="191"/>
    </location>
    <ligand>
        <name>Mg(2+)</name>
        <dbReference type="ChEBI" id="CHEBI:18420"/>
    </ligand>
</feature>
<feature type="binding site" evidence="1">
    <location>
        <position position="193"/>
    </location>
    <ligand>
        <name>Mg(2+)</name>
        <dbReference type="ChEBI" id="CHEBI:18420"/>
    </ligand>
</feature>
<feature type="binding site" evidence="1">
    <location>
        <position position="194"/>
    </location>
    <ligand>
        <name>Mg(2+)</name>
        <dbReference type="ChEBI" id="CHEBI:18420"/>
    </ligand>
</feature>
<feature type="binding site" evidence="1">
    <location>
        <position position="285"/>
    </location>
    <ligand>
        <name>substrate</name>
    </ligand>
</feature>
<feature type="binding site" evidence="1">
    <location>
        <position position="317"/>
    </location>
    <ligand>
        <name>substrate</name>
    </ligand>
</feature>
<feature type="binding site" evidence="1">
    <location>
        <position position="369"/>
    </location>
    <ligand>
        <name>substrate</name>
    </ligand>
</feature>
<feature type="site" description="Transition state stabilizer" evidence="1">
    <location>
        <position position="324"/>
    </location>
</feature>
<feature type="modified residue" description="N6,N6,N6-trimethyllysine" evidence="1">
    <location>
        <position position="4"/>
    </location>
</feature>
<feature type="modified residue" description="N6-carboxylysine" evidence="1">
    <location>
        <position position="191"/>
    </location>
</feature>
<feature type="disulfide bond" description="Interchain; in linked form" evidence="1">
    <location>
        <position position="237"/>
    </location>
</feature>
<feature type="non-terminal residue">
    <location>
        <position position="1"/>
    </location>
</feature>
<accession>Q33245</accession>
<proteinExistence type="inferred from homology"/>
<geneLocation type="chloroplast"/>
<sequence length="465" mass="51591">VGFKAGVKDYKLTYYTPEYETKDTDILAAFRVTPQPGVPPEEAGAAVAAESSTGTWTTVWTDGLTSLDRYKGRCYHIEPVAGEENQFIAYVAYPLDLFEEGSVTNMFTSIVGNVFGFKAXRALRLEDLRIPSAYTKTFQGPPHGIQVERDKLNKYGRPLLGCTIKPKLGLSAKNYGRAVYECLRGGLDFTKDDENVNSQPFMRWRDRFLFCAEAIYKSQAETGEIKGHYLNATAGTCEEMIKRAVFARELAVPIVMHDYLTGGFTANTSLAHYCRDNGLLLHIHRAMHAVIDRQKNHGMHFRVLAKALRLSGGDHIHAGTVVGKLEGEREITLGFVDLLRDDFVEKDRSRGIYFTQDWVSLPGVLPVASGGIHVWHMPALTEIFGDDSVLQFGGGTLGHPWGNAPGAVANRVALEACVKARNEGRDLAREGNEIIREASKWSPELAAACEVWKEIKLEFEAMDTL</sequence>
<evidence type="ECO:0000255" key="1">
    <source>
        <dbReference type="HAMAP-Rule" id="MF_01338"/>
    </source>
</evidence>
<evidence type="ECO:0000305" key="2"/>
<keyword id="KW-0113">Calvin cycle</keyword>
<keyword id="KW-0120">Carbon dioxide fixation</keyword>
<keyword id="KW-0150">Chloroplast</keyword>
<keyword id="KW-1015">Disulfide bond</keyword>
<keyword id="KW-0456">Lyase</keyword>
<keyword id="KW-0460">Magnesium</keyword>
<keyword id="KW-0479">Metal-binding</keyword>
<keyword id="KW-0488">Methylation</keyword>
<keyword id="KW-0503">Monooxygenase</keyword>
<keyword id="KW-0560">Oxidoreductase</keyword>
<keyword id="KW-0601">Photorespiration</keyword>
<keyword id="KW-0602">Photosynthesis</keyword>
<keyword id="KW-0934">Plastid</keyword>
<organism>
    <name type="scientific">Ulmus alata</name>
    <name type="common">Winged elm</name>
    <dbReference type="NCBI Taxonomy" id="24736"/>
    <lineage>
        <taxon>Eukaryota</taxon>
        <taxon>Viridiplantae</taxon>
        <taxon>Streptophyta</taxon>
        <taxon>Embryophyta</taxon>
        <taxon>Tracheophyta</taxon>
        <taxon>Spermatophyta</taxon>
        <taxon>Magnoliopsida</taxon>
        <taxon>eudicotyledons</taxon>
        <taxon>Gunneridae</taxon>
        <taxon>Pentapetalae</taxon>
        <taxon>rosids</taxon>
        <taxon>fabids</taxon>
        <taxon>Rosales</taxon>
        <taxon>Ulmaceae</taxon>
        <taxon>Ulmus</taxon>
    </lineage>
</organism>